<organism>
    <name type="scientific">Sulfurisphaera tokodaii (strain DSM 16993 / JCM 10545 / NBRC 100140 / 7)</name>
    <name type="common">Sulfolobus tokodaii</name>
    <dbReference type="NCBI Taxonomy" id="273063"/>
    <lineage>
        <taxon>Archaea</taxon>
        <taxon>Thermoproteota</taxon>
        <taxon>Thermoprotei</taxon>
        <taxon>Sulfolobales</taxon>
        <taxon>Sulfolobaceae</taxon>
        <taxon>Sulfurisphaera</taxon>
    </lineage>
</organism>
<name>RL18E_SULTO</name>
<feature type="chain" id="PRO_0000132804" description="Large ribosomal subunit protein eL18">
    <location>
        <begin position="1"/>
        <end position="118"/>
    </location>
</feature>
<reference key="1">
    <citation type="journal article" date="2001" name="DNA Res.">
        <title>Complete genome sequence of an aerobic thermoacidophilic Crenarchaeon, Sulfolobus tokodaii strain7.</title>
        <authorList>
            <person name="Kawarabayasi Y."/>
            <person name="Hino Y."/>
            <person name="Horikawa H."/>
            <person name="Jin-no K."/>
            <person name="Takahashi M."/>
            <person name="Sekine M."/>
            <person name="Baba S."/>
            <person name="Ankai A."/>
            <person name="Kosugi H."/>
            <person name="Hosoyama A."/>
            <person name="Fukui S."/>
            <person name="Nagai Y."/>
            <person name="Nishijima K."/>
            <person name="Otsuka R."/>
            <person name="Nakazawa H."/>
            <person name="Takamiya M."/>
            <person name="Kato Y."/>
            <person name="Yoshizawa T."/>
            <person name="Tanaka T."/>
            <person name="Kudoh Y."/>
            <person name="Yamazaki J."/>
            <person name="Kushida N."/>
            <person name="Oguchi A."/>
            <person name="Aoki K."/>
            <person name="Masuda S."/>
            <person name="Yanagii M."/>
            <person name="Nishimura M."/>
            <person name="Yamagishi A."/>
            <person name="Oshima T."/>
            <person name="Kikuchi H."/>
        </authorList>
    </citation>
    <scope>NUCLEOTIDE SEQUENCE [LARGE SCALE GENOMIC DNA]</scope>
    <source>
        <strain>DSM 16993 / JCM 10545 / NBRC 100140 / 7</strain>
    </source>
</reference>
<keyword id="KW-1185">Reference proteome</keyword>
<keyword id="KW-0687">Ribonucleoprotein</keyword>
<keyword id="KW-0689">Ribosomal protein</keyword>
<accession>Q96YW1</accession>
<sequence>MVARTGSTNIMVRKLIDLLSKQKKPLWKRVAEELQKPSRQRPYINIYKINKYTKPNDVVVVPGKVLGIGNLDHPVTVVALSFSKSAKEKIEKSGGKVISLYKALEEVKDFKNVRLMKG</sequence>
<comment type="similarity">
    <text evidence="1">Belongs to the eukaryotic ribosomal protein eL18 family.</text>
</comment>
<protein>
    <recommendedName>
        <fullName evidence="1">Large ribosomal subunit protein eL18</fullName>
    </recommendedName>
    <alternativeName>
        <fullName evidence="2">50S ribosomal protein L18e</fullName>
    </alternativeName>
</protein>
<dbReference type="EMBL" id="BA000023">
    <property type="protein sequence ID" value="BAB67165.1"/>
    <property type="molecule type" value="Genomic_DNA"/>
</dbReference>
<dbReference type="RefSeq" id="WP_010980141.1">
    <property type="nucleotide sequence ID" value="NC_003106.2"/>
</dbReference>
<dbReference type="SMR" id="Q96YW1"/>
<dbReference type="STRING" id="273063.STK_20660"/>
<dbReference type="KEGG" id="sto:STK_20660"/>
<dbReference type="PATRIC" id="fig|273063.9.peg.2354"/>
<dbReference type="eggNOG" id="arCOG00780">
    <property type="taxonomic scope" value="Archaea"/>
</dbReference>
<dbReference type="OrthoDB" id="11309at2157"/>
<dbReference type="Proteomes" id="UP000001015">
    <property type="component" value="Chromosome"/>
</dbReference>
<dbReference type="GO" id="GO:1990904">
    <property type="term" value="C:ribonucleoprotein complex"/>
    <property type="evidence" value="ECO:0007669"/>
    <property type="project" value="UniProtKB-KW"/>
</dbReference>
<dbReference type="GO" id="GO:0005840">
    <property type="term" value="C:ribosome"/>
    <property type="evidence" value="ECO:0007669"/>
    <property type="project" value="UniProtKB-KW"/>
</dbReference>
<dbReference type="GO" id="GO:0003735">
    <property type="term" value="F:structural constituent of ribosome"/>
    <property type="evidence" value="ECO:0007669"/>
    <property type="project" value="InterPro"/>
</dbReference>
<dbReference type="GO" id="GO:0006412">
    <property type="term" value="P:translation"/>
    <property type="evidence" value="ECO:0007669"/>
    <property type="project" value="UniProtKB-UniRule"/>
</dbReference>
<dbReference type="Gene3D" id="3.100.10.10">
    <property type="match status" value="1"/>
</dbReference>
<dbReference type="HAMAP" id="MF_00329">
    <property type="entry name" value="Ribosomal_eL18"/>
    <property type="match status" value="1"/>
</dbReference>
<dbReference type="InterPro" id="IPR021132">
    <property type="entry name" value="Ribosomal_eL18/eL18-A/B/_CS"/>
</dbReference>
<dbReference type="InterPro" id="IPR022947">
    <property type="entry name" value="Ribosomal_eL18_arc"/>
</dbReference>
<dbReference type="InterPro" id="IPR021131">
    <property type="entry name" value="Ribosomal_uL15/eL18"/>
</dbReference>
<dbReference type="InterPro" id="IPR036227">
    <property type="entry name" value="Ribosomal_uL15/eL18_sf"/>
</dbReference>
<dbReference type="InterPro" id="IPR001196">
    <property type="entry name" value="Ribosomal_uL15_CS"/>
</dbReference>
<dbReference type="NCBIfam" id="NF003079">
    <property type="entry name" value="PRK04005.1"/>
    <property type="match status" value="1"/>
</dbReference>
<dbReference type="Pfam" id="PF00828">
    <property type="entry name" value="Ribosomal_L27A"/>
    <property type="match status" value="1"/>
</dbReference>
<dbReference type="SUPFAM" id="SSF52080">
    <property type="entry name" value="Ribosomal proteins L15p and L18e"/>
    <property type="match status" value="1"/>
</dbReference>
<dbReference type="PROSITE" id="PS01106">
    <property type="entry name" value="RIBOSOMAL_L18E"/>
    <property type="match status" value="1"/>
</dbReference>
<gene>
    <name evidence="1" type="primary">rpl18e</name>
    <name type="ordered locus">STK_20660</name>
</gene>
<proteinExistence type="inferred from homology"/>
<evidence type="ECO:0000255" key="1">
    <source>
        <dbReference type="HAMAP-Rule" id="MF_00329"/>
    </source>
</evidence>
<evidence type="ECO:0000305" key="2"/>